<sequence>MKLAVYGKGGIGKSTTSCNISVALAKRGKKVLQIGCDPKHDSTFTLTGFLIPTIIDTLQEKDYHYEDVWPEDVIYKGYGGVDCVEAGGPPAGAGCGGYVVGETVKLLKELNAFDEYDVILFDVLGDVVCGGFAAPLNYADYCMIVTDNGFDALFAANRIAASVREKARTHPLRLAGLIGNRTSKRDLIEKYVEAVPMPVLEVLPLIEDIRVSRVKGKTLFEMAESDPSLNYVCDYYLSIADQILARPEGVVPNDAPDRELFSLLSDFYLNPGKPQVPNPEEELDLMIV</sequence>
<evidence type="ECO:0000255" key="1">
    <source>
        <dbReference type="HAMAP-Rule" id="MF_00355"/>
    </source>
</evidence>
<proteinExistence type="inferred from homology"/>
<feature type="chain" id="PRO_0000139569" description="Light-independent protochlorophyllide reductase iron-sulfur ATP-binding protein">
    <location>
        <begin position="1"/>
        <end position="288"/>
    </location>
</feature>
<feature type="binding site" evidence="1">
    <location>
        <begin position="10"/>
        <end position="15"/>
    </location>
    <ligand>
        <name>ATP</name>
        <dbReference type="ChEBI" id="CHEBI:30616"/>
    </ligand>
</feature>
<feature type="binding site" evidence="1">
    <location>
        <position position="14"/>
    </location>
    <ligand>
        <name>Mg(2+)</name>
        <dbReference type="ChEBI" id="CHEBI:18420"/>
    </ligand>
</feature>
<feature type="binding site" evidence="1">
    <location>
        <position position="39"/>
    </location>
    <ligand>
        <name>ATP</name>
        <dbReference type="ChEBI" id="CHEBI:30616"/>
    </ligand>
</feature>
<feature type="binding site" evidence="1">
    <location>
        <position position="95"/>
    </location>
    <ligand>
        <name>[4Fe-4S] cluster</name>
        <dbReference type="ChEBI" id="CHEBI:49883"/>
        <note>ligand shared between dimeric partners</note>
    </ligand>
</feature>
<feature type="binding site" evidence="1">
    <location>
        <position position="129"/>
    </location>
    <ligand>
        <name>[4Fe-4S] cluster</name>
        <dbReference type="ChEBI" id="CHEBI:49883"/>
        <note>ligand shared between dimeric partners</note>
    </ligand>
</feature>
<feature type="binding site" evidence="1">
    <location>
        <begin position="180"/>
        <end position="181"/>
    </location>
    <ligand>
        <name>ATP</name>
        <dbReference type="ChEBI" id="CHEBI:30616"/>
    </ligand>
</feature>
<keyword id="KW-0004">4Fe-4S</keyword>
<keyword id="KW-0067">ATP-binding</keyword>
<keyword id="KW-0149">Chlorophyll biosynthesis</keyword>
<keyword id="KW-0408">Iron</keyword>
<keyword id="KW-0411">Iron-sulfur</keyword>
<keyword id="KW-0460">Magnesium</keyword>
<keyword id="KW-0479">Metal-binding</keyword>
<keyword id="KW-0547">Nucleotide-binding</keyword>
<keyword id="KW-0560">Oxidoreductase</keyword>
<keyword id="KW-0602">Photosynthesis</keyword>
<keyword id="KW-1185">Reference proteome</keyword>
<gene>
    <name evidence="1" type="primary">chlL</name>
    <name type="ordered locus">all5078</name>
</gene>
<protein>
    <recommendedName>
        <fullName evidence="1">Light-independent protochlorophyllide reductase iron-sulfur ATP-binding protein</fullName>
        <shortName evidence="1">DPOR subunit L</shortName>
        <shortName evidence="1">LI-POR subunit L</shortName>
        <ecNumber evidence="1">1.3.7.7</ecNumber>
    </recommendedName>
</protein>
<accession>Q8YM62</accession>
<comment type="function">
    <text evidence="1">Component of the dark-operative protochlorophyllide reductase (DPOR) that uses Mg-ATP and reduced ferredoxin to reduce ring D of protochlorophyllide (Pchlide) to form chlorophyllide a (Chlide). This reaction is light-independent. The L component serves as a unique electron donor to the NB-component of the complex, and binds Mg-ATP.</text>
</comment>
<comment type="catalytic activity">
    <reaction evidence="1">
        <text>chlorophyllide a + oxidized 2[4Fe-4S]-[ferredoxin] + 2 ADP + 2 phosphate = protochlorophyllide a + reduced 2[4Fe-4S]-[ferredoxin] + 2 ATP + 2 H2O</text>
        <dbReference type="Rhea" id="RHEA:28202"/>
        <dbReference type="Rhea" id="RHEA-COMP:10002"/>
        <dbReference type="Rhea" id="RHEA-COMP:10004"/>
        <dbReference type="ChEBI" id="CHEBI:15377"/>
        <dbReference type="ChEBI" id="CHEBI:30616"/>
        <dbReference type="ChEBI" id="CHEBI:33722"/>
        <dbReference type="ChEBI" id="CHEBI:33723"/>
        <dbReference type="ChEBI" id="CHEBI:43474"/>
        <dbReference type="ChEBI" id="CHEBI:83348"/>
        <dbReference type="ChEBI" id="CHEBI:83350"/>
        <dbReference type="ChEBI" id="CHEBI:456216"/>
        <dbReference type="EC" id="1.3.7.7"/>
    </reaction>
</comment>
<comment type="cofactor">
    <cofactor evidence="1">
        <name>[4Fe-4S] cluster</name>
        <dbReference type="ChEBI" id="CHEBI:49883"/>
    </cofactor>
    <text evidence="1">Binds 1 [4Fe-4S] cluster per dimer.</text>
</comment>
<comment type="pathway">
    <text evidence="1">Porphyrin-containing compound metabolism; chlorophyll biosynthesis (light-independent).</text>
</comment>
<comment type="subunit">
    <text evidence="1">Homodimer. Protochlorophyllide reductase is composed of three subunits; ChlL, ChlN and ChlB.</text>
</comment>
<comment type="similarity">
    <text evidence="1">Belongs to the NifH/BchL/ChlL family.</text>
</comment>
<name>CHLL_NOSS1</name>
<reference key="1">
    <citation type="journal article" date="2001" name="DNA Res.">
        <title>Complete genomic sequence of the filamentous nitrogen-fixing cyanobacterium Anabaena sp. strain PCC 7120.</title>
        <authorList>
            <person name="Kaneko T."/>
            <person name="Nakamura Y."/>
            <person name="Wolk C.P."/>
            <person name="Kuritz T."/>
            <person name="Sasamoto S."/>
            <person name="Watanabe A."/>
            <person name="Iriguchi M."/>
            <person name="Ishikawa A."/>
            <person name="Kawashima K."/>
            <person name="Kimura T."/>
            <person name="Kishida Y."/>
            <person name="Kohara M."/>
            <person name="Matsumoto M."/>
            <person name="Matsuno A."/>
            <person name="Muraki A."/>
            <person name="Nakazaki N."/>
            <person name="Shimpo S."/>
            <person name="Sugimoto M."/>
            <person name="Takazawa M."/>
            <person name="Yamada M."/>
            <person name="Yasuda M."/>
            <person name="Tabata S."/>
        </authorList>
    </citation>
    <scope>NUCLEOTIDE SEQUENCE [LARGE SCALE GENOMIC DNA]</scope>
    <source>
        <strain>PCC 7120 / SAG 25.82 / UTEX 2576</strain>
    </source>
</reference>
<dbReference type="EC" id="1.3.7.7" evidence="1"/>
<dbReference type="EMBL" id="BA000019">
    <property type="protein sequence ID" value="BAB76777.1"/>
    <property type="molecule type" value="Genomic_DNA"/>
</dbReference>
<dbReference type="PIR" id="AF2440">
    <property type="entry name" value="AF2440"/>
</dbReference>
<dbReference type="SMR" id="Q8YM62"/>
<dbReference type="STRING" id="103690.gene:10497136"/>
<dbReference type="KEGG" id="ana:all5078"/>
<dbReference type="eggNOG" id="COG1348">
    <property type="taxonomic scope" value="Bacteria"/>
</dbReference>
<dbReference type="UniPathway" id="UPA00670"/>
<dbReference type="Proteomes" id="UP000002483">
    <property type="component" value="Chromosome"/>
</dbReference>
<dbReference type="GO" id="GO:0051539">
    <property type="term" value="F:4 iron, 4 sulfur cluster binding"/>
    <property type="evidence" value="ECO:0007669"/>
    <property type="project" value="UniProtKB-UniRule"/>
</dbReference>
<dbReference type="GO" id="GO:0005524">
    <property type="term" value="F:ATP binding"/>
    <property type="evidence" value="ECO:0007669"/>
    <property type="project" value="UniProtKB-UniRule"/>
</dbReference>
<dbReference type="GO" id="GO:0046872">
    <property type="term" value="F:metal ion binding"/>
    <property type="evidence" value="ECO:0007669"/>
    <property type="project" value="UniProtKB-KW"/>
</dbReference>
<dbReference type="GO" id="GO:0016730">
    <property type="term" value="F:oxidoreductase activity, acting on iron-sulfur proteins as donors"/>
    <property type="evidence" value="ECO:0007669"/>
    <property type="project" value="InterPro"/>
</dbReference>
<dbReference type="GO" id="GO:0016636">
    <property type="term" value="F:oxidoreductase activity, acting on the CH-CH group of donors, iron-sulfur protein as acceptor"/>
    <property type="evidence" value="ECO:0007669"/>
    <property type="project" value="UniProtKB-UniRule"/>
</dbReference>
<dbReference type="GO" id="GO:0036068">
    <property type="term" value="P:light-independent chlorophyll biosynthetic process"/>
    <property type="evidence" value="ECO:0007669"/>
    <property type="project" value="UniProtKB-UniRule"/>
</dbReference>
<dbReference type="GO" id="GO:0019685">
    <property type="term" value="P:photosynthesis, dark reaction"/>
    <property type="evidence" value="ECO:0007669"/>
    <property type="project" value="InterPro"/>
</dbReference>
<dbReference type="CDD" id="cd02032">
    <property type="entry name" value="Bchl-like"/>
    <property type="match status" value="1"/>
</dbReference>
<dbReference type="Gene3D" id="3.40.50.300">
    <property type="entry name" value="P-loop containing nucleotide triphosphate hydrolases"/>
    <property type="match status" value="1"/>
</dbReference>
<dbReference type="HAMAP" id="MF_00355">
    <property type="entry name" value="ChlL_BchL"/>
    <property type="match status" value="1"/>
</dbReference>
<dbReference type="InterPro" id="IPR030655">
    <property type="entry name" value="NifH/chlL_CS"/>
</dbReference>
<dbReference type="InterPro" id="IPR000392">
    <property type="entry name" value="NifH/frxC"/>
</dbReference>
<dbReference type="InterPro" id="IPR027417">
    <property type="entry name" value="P-loop_NTPase"/>
</dbReference>
<dbReference type="InterPro" id="IPR005971">
    <property type="entry name" value="Protochlorophyllide_ATP-bd"/>
</dbReference>
<dbReference type="NCBIfam" id="TIGR01281">
    <property type="entry name" value="DPOR_bchL"/>
    <property type="match status" value="1"/>
</dbReference>
<dbReference type="PANTHER" id="PTHR42864">
    <property type="entry name" value="LIGHT-INDEPENDENT PROTOCHLOROPHYLLIDE REDUCTASE IRON-SULFUR ATP-BINDING PROTEIN"/>
    <property type="match status" value="1"/>
</dbReference>
<dbReference type="PANTHER" id="PTHR42864:SF2">
    <property type="entry name" value="LIGHT-INDEPENDENT PROTOCHLOROPHYLLIDE REDUCTASE IRON-SULFUR ATP-BINDING PROTEIN"/>
    <property type="match status" value="1"/>
</dbReference>
<dbReference type="Pfam" id="PF00142">
    <property type="entry name" value="Fer4_NifH"/>
    <property type="match status" value="1"/>
</dbReference>
<dbReference type="PIRSF" id="PIRSF000363">
    <property type="entry name" value="Nitrogenase_iron"/>
    <property type="match status" value="1"/>
</dbReference>
<dbReference type="PRINTS" id="PR00091">
    <property type="entry name" value="NITROGNASEII"/>
</dbReference>
<dbReference type="SUPFAM" id="SSF52540">
    <property type="entry name" value="P-loop containing nucleoside triphosphate hydrolases"/>
    <property type="match status" value="1"/>
</dbReference>
<dbReference type="PROSITE" id="PS00746">
    <property type="entry name" value="NIFH_FRXC_1"/>
    <property type="match status" value="1"/>
</dbReference>
<dbReference type="PROSITE" id="PS00692">
    <property type="entry name" value="NIFH_FRXC_2"/>
    <property type="match status" value="1"/>
</dbReference>
<dbReference type="PROSITE" id="PS51026">
    <property type="entry name" value="NIFH_FRXC_3"/>
    <property type="match status" value="1"/>
</dbReference>
<organism>
    <name type="scientific">Nostoc sp. (strain PCC 7120 / SAG 25.82 / UTEX 2576)</name>
    <dbReference type="NCBI Taxonomy" id="103690"/>
    <lineage>
        <taxon>Bacteria</taxon>
        <taxon>Bacillati</taxon>
        <taxon>Cyanobacteriota</taxon>
        <taxon>Cyanophyceae</taxon>
        <taxon>Nostocales</taxon>
        <taxon>Nostocaceae</taxon>
        <taxon>Nostoc</taxon>
    </lineage>
</organism>